<gene>
    <name evidence="1" type="primary">rpsS</name>
    <name type="ordered locus">Exig_0100</name>
</gene>
<name>RS19_EXIS2</name>
<dbReference type="EMBL" id="CP001022">
    <property type="protein sequence ID" value="ACB59587.1"/>
    <property type="molecule type" value="Genomic_DNA"/>
</dbReference>
<dbReference type="RefSeq" id="WP_012369013.1">
    <property type="nucleotide sequence ID" value="NC_010556.1"/>
</dbReference>
<dbReference type="SMR" id="B1YGV4"/>
<dbReference type="STRING" id="262543.Exig_0100"/>
<dbReference type="GeneID" id="90838854"/>
<dbReference type="KEGG" id="esi:Exig_0100"/>
<dbReference type="eggNOG" id="COG0185">
    <property type="taxonomic scope" value="Bacteria"/>
</dbReference>
<dbReference type="HOGENOM" id="CLU_144911_0_1_9"/>
<dbReference type="OrthoDB" id="9797833at2"/>
<dbReference type="Proteomes" id="UP000001681">
    <property type="component" value="Chromosome"/>
</dbReference>
<dbReference type="GO" id="GO:0005737">
    <property type="term" value="C:cytoplasm"/>
    <property type="evidence" value="ECO:0007669"/>
    <property type="project" value="UniProtKB-ARBA"/>
</dbReference>
<dbReference type="GO" id="GO:0015935">
    <property type="term" value="C:small ribosomal subunit"/>
    <property type="evidence" value="ECO:0007669"/>
    <property type="project" value="InterPro"/>
</dbReference>
<dbReference type="GO" id="GO:0019843">
    <property type="term" value="F:rRNA binding"/>
    <property type="evidence" value="ECO:0007669"/>
    <property type="project" value="UniProtKB-UniRule"/>
</dbReference>
<dbReference type="GO" id="GO:0003735">
    <property type="term" value="F:structural constituent of ribosome"/>
    <property type="evidence" value="ECO:0007669"/>
    <property type="project" value="InterPro"/>
</dbReference>
<dbReference type="GO" id="GO:0000028">
    <property type="term" value="P:ribosomal small subunit assembly"/>
    <property type="evidence" value="ECO:0007669"/>
    <property type="project" value="TreeGrafter"/>
</dbReference>
<dbReference type="GO" id="GO:0006412">
    <property type="term" value="P:translation"/>
    <property type="evidence" value="ECO:0007669"/>
    <property type="project" value="UniProtKB-UniRule"/>
</dbReference>
<dbReference type="FunFam" id="3.30.860.10:FF:000001">
    <property type="entry name" value="30S ribosomal protein S19"/>
    <property type="match status" value="1"/>
</dbReference>
<dbReference type="Gene3D" id="3.30.860.10">
    <property type="entry name" value="30s Ribosomal Protein S19, Chain A"/>
    <property type="match status" value="1"/>
</dbReference>
<dbReference type="HAMAP" id="MF_00531">
    <property type="entry name" value="Ribosomal_uS19"/>
    <property type="match status" value="1"/>
</dbReference>
<dbReference type="InterPro" id="IPR002222">
    <property type="entry name" value="Ribosomal_uS19"/>
</dbReference>
<dbReference type="InterPro" id="IPR005732">
    <property type="entry name" value="Ribosomal_uS19_bac-type"/>
</dbReference>
<dbReference type="InterPro" id="IPR020934">
    <property type="entry name" value="Ribosomal_uS19_CS"/>
</dbReference>
<dbReference type="InterPro" id="IPR023575">
    <property type="entry name" value="Ribosomal_uS19_SF"/>
</dbReference>
<dbReference type="NCBIfam" id="TIGR01050">
    <property type="entry name" value="rpsS_bact"/>
    <property type="match status" value="1"/>
</dbReference>
<dbReference type="PANTHER" id="PTHR11880">
    <property type="entry name" value="RIBOSOMAL PROTEIN S19P FAMILY MEMBER"/>
    <property type="match status" value="1"/>
</dbReference>
<dbReference type="PANTHER" id="PTHR11880:SF8">
    <property type="entry name" value="SMALL RIBOSOMAL SUBUNIT PROTEIN US19M"/>
    <property type="match status" value="1"/>
</dbReference>
<dbReference type="Pfam" id="PF00203">
    <property type="entry name" value="Ribosomal_S19"/>
    <property type="match status" value="1"/>
</dbReference>
<dbReference type="PIRSF" id="PIRSF002144">
    <property type="entry name" value="Ribosomal_S19"/>
    <property type="match status" value="1"/>
</dbReference>
<dbReference type="PRINTS" id="PR00975">
    <property type="entry name" value="RIBOSOMALS19"/>
</dbReference>
<dbReference type="SUPFAM" id="SSF54570">
    <property type="entry name" value="Ribosomal protein S19"/>
    <property type="match status" value="1"/>
</dbReference>
<dbReference type="PROSITE" id="PS00323">
    <property type="entry name" value="RIBOSOMAL_S19"/>
    <property type="match status" value="1"/>
</dbReference>
<feature type="chain" id="PRO_1000127979" description="Small ribosomal subunit protein uS19">
    <location>
        <begin position="1"/>
        <end position="92"/>
    </location>
</feature>
<protein>
    <recommendedName>
        <fullName evidence="1">Small ribosomal subunit protein uS19</fullName>
    </recommendedName>
    <alternativeName>
        <fullName evidence="2">30S ribosomal protein S19</fullName>
    </alternativeName>
</protein>
<evidence type="ECO:0000255" key="1">
    <source>
        <dbReference type="HAMAP-Rule" id="MF_00531"/>
    </source>
</evidence>
<evidence type="ECO:0000305" key="2"/>
<accession>B1YGV4</accession>
<keyword id="KW-1185">Reference proteome</keyword>
<keyword id="KW-0687">Ribonucleoprotein</keyword>
<keyword id="KW-0689">Ribosomal protein</keyword>
<keyword id="KW-0694">RNA-binding</keyword>
<keyword id="KW-0699">rRNA-binding</keyword>
<comment type="function">
    <text evidence="1">Protein S19 forms a complex with S13 that binds strongly to the 16S ribosomal RNA.</text>
</comment>
<comment type="similarity">
    <text evidence="1">Belongs to the universal ribosomal protein uS19 family.</text>
</comment>
<proteinExistence type="inferred from homology"/>
<sequence length="92" mass="10369">MGRSLKKGPFADHHLLAKVDKANEAGDKHVIKTWSRRSTIFPEFIGHTIAVYDGRKHVPVYVTEDMVGHKLGEFAPTRSYKGHAGNDKKTKR</sequence>
<reference key="1">
    <citation type="submission" date="2008-04" db="EMBL/GenBank/DDBJ databases">
        <title>Complete sequence of chromosome of Exiguobacterium sibiricum 255-15.</title>
        <authorList>
            <consortium name="US DOE Joint Genome Institute"/>
            <person name="Copeland A."/>
            <person name="Lucas S."/>
            <person name="Lapidus A."/>
            <person name="Glavina del Rio T."/>
            <person name="Dalin E."/>
            <person name="Tice H."/>
            <person name="Bruce D."/>
            <person name="Goodwin L."/>
            <person name="Pitluck S."/>
            <person name="Kiss H."/>
            <person name="Chertkov O."/>
            <person name="Monk C."/>
            <person name="Brettin T."/>
            <person name="Detter J.C."/>
            <person name="Han C."/>
            <person name="Kuske C.R."/>
            <person name="Schmutz J."/>
            <person name="Larimer F."/>
            <person name="Land M."/>
            <person name="Hauser L."/>
            <person name="Kyrpides N."/>
            <person name="Mikhailova N."/>
            <person name="Vishnivetskaya T."/>
            <person name="Rodrigues D.F."/>
            <person name="Gilichinsky D."/>
            <person name="Tiedje J."/>
            <person name="Richardson P."/>
        </authorList>
    </citation>
    <scope>NUCLEOTIDE SEQUENCE [LARGE SCALE GENOMIC DNA]</scope>
    <source>
        <strain>DSM 17290 / CCUG 55495 / CIP 109462 / JCM 13490 / 255-15</strain>
    </source>
</reference>
<organism>
    <name type="scientific">Exiguobacterium sibiricum (strain DSM 17290 / CCUG 55495 / CIP 109462 / JCM 13490 / 255-15)</name>
    <dbReference type="NCBI Taxonomy" id="262543"/>
    <lineage>
        <taxon>Bacteria</taxon>
        <taxon>Bacillati</taxon>
        <taxon>Bacillota</taxon>
        <taxon>Bacilli</taxon>
        <taxon>Bacillales</taxon>
        <taxon>Bacillales Family XII. Incertae Sedis</taxon>
        <taxon>Exiguobacterium</taxon>
    </lineage>
</organism>